<name>HSLV_SALPB</name>
<reference key="1">
    <citation type="submission" date="2007-11" db="EMBL/GenBank/DDBJ databases">
        <authorList>
            <consortium name="The Salmonella enterica serovar Paratyphi B Genome Sequencing Project"/>
            <person name="McClelland M."/>
            <person name="Sanderson E.K."/>
            <person name="Porwollik S."/>
            <person name="Spieth J."/>
            <person name="Clifton W.S."/>
            <person name="Fulton R."/>
            <person name="Cordes M."/>
            <person name="Wollam A."/>
            <person name="Shah N."/>
            <person name="Pepin K."/>
            <person name="Bhonagiri V."/>
            <person name="Nash W."/>
            <person name="Johnson M."/>
            <person name="Thiruvilangam P."/>
            <person name="Wilson R."/>
        </authorList>
    </citation>
    <scope>NUCLEOTIDE SEQUENCE [LARGE SCALE GENOMIC DNA]</scope>
    <source>
        <strain>ATCC BAA-1250 / SPB7</strain>
    </source>
</reference>
<proteinExistence type="inferred from homology"/>
<protein>
    <recommendedName>
        <fullName evidence="1">ATP-dependent protease subunit HslV</fullName>
        <ecNumber evidence="1">3.4.25.2</ecNumber>
    </recommendedName>
    <alternativeName>
        <fullName evidence="1">Heat shock protein HslV</fullName>
    </alternativeName>
</protein>
<gene>
    <name evidence="1" type="primary">hslV</name>
    <name type="ordered locus">SPAB_05069</name>
</gene>
<organism>
    <name type="scientific">Salmonella paratyphi B (strain ATCC BAA-1250 / SPB7)</name>
    <dbReference type="NCBI Taxonomy" id="1016998"/>
    <lineage>
        <taxon>Bacteria</taxon>
        <taxon>Pseudomonadati</taxon>
        <taxon>Pseudomonadota</taxon>
        <taxon>Gammaproteobacteria</taxon>
        <taxon>Enterobacterales</taxon>
        <taxon>Enterobacteriaceae</taxon>
        <taxon>Salmonella</taxon>
    </lineage>
</organism>
<comment type="function">
    <text evidence="1">Protease subunit of a proteasome-like degradation complex believed to be a general protein degrading machinery.</text>
</comment>
<comment type="catalytic activity">
    <reaction evidence="1">
        <text>ATP-dependent cleavage of peptide bonds with broad specificity.</text>
        <dbReference type="EC" id="3.4.25.2"/>
    </reaction>
</comment>
<comment type="activity regulation">
    <text evidence="1">Allosterically activated by HslU binding.</text>
</comment>
<comment type="subunit">
    <text evidence="1">A double ring-shaped homohexamer of HslV is capped on each side by a ring-shaped HslU homohexamer. The assembly of the HslU/HslV complex is dependent on binding of ATP.</text>
</comment>
<comment type="subcellular location">
    <subcellularLocation>
        <location evidence="1">Cytoplasm</location>
    </subcellularLocation>
</comment>
<comment type="induction">
    <text evidence="1">By heat shock.</text>
</comment>
<comment type="similarity">
    <text evidence="1">Belongs to the peptidase T1B family. HslV subfamily.</text>
</comment>
<sequence length="176" mass="18985">MTTIVSVRRNGHVVIAGDGQATLGNTVMKGNVKKVRRLYNDKVIAGFAGGTADAFTLFELFERKLEMHQGHLVKAAVELAKDWRTDRMLRKLEALLAVADETASLIITGNGDVVQPENDLIAIGSGGPYAQAAARALLENTELGAREIAEKALDIAGDICIYTNHFHTIEELTAKA</sequence>
<feature type="chain" id="PRO_1000078427" description="ATP-dependent protease subunit HslV">
    <location>
        <begin position="1"/>
        <end position="176"/>
    </location>
</feature>
<feature type="active site" evidence="1">
    <location>
        <position position="2"/>
    </location>
</feature>
<feature type="binding site" evidence="1">
    <location>
        <position position="157"/>
    </location>
    <ligand>
        <name>Na(+)</name>
        <dbReference type="ChEBI" id="CHEBI:29101"/>
    </ligand>
</feature>
<feature type="binding site" evidence="1">
    <location>
        <position position="160"/>
    </location>
    <ligand>
        <name>Na(+)</name>
        <dbReference type="ChEBI" id="CHEBI:29101"/>
    </ligand>
</feature>
<feature type="binding site" evidence="1">
    <location>
        <position position="163"/>
    </location>
    <ligand>
        <name>Na(+)</name>
        <dbReference type="ChEBI" id="CHEBI:29101"/>
    </ligand>
</feature>
<evidence type="ECO:0000255" key="1">
    <source>
        <dbReference type="HAMAP-Rule" id="MF_00248"/>
    </source>
</evidence>
<keyword id="KW-0021">Allosteric enzyme</keyword>
<keyword id="KW-0963">Cytoplasm</keyword>
<keyword id="KW-0378">Hydrolase</keyword>
<keyword id="KW-0479">Metal-binding</keyword>
<keyword id="KW-0645">Protease</keyword>
<keyword id="KW-0915">Sodium</keyword>
<keyword id="KW-0346">Stress response</keyword>
<keyword id="KW-0888">Threonine protease</keyword>
<accession>A9MZI2</accession>
<dbReference type="EC" id="3.4.25.2" evidence="1"/>
<dbReference type="EMBL" id="CP000886">
    <property type="protein sequence ID" value="ABX70360.1"/>
    <property type="molecule type" value="Genomic_DNA"/>
</dbReference>
<dbReference type="RefSeq" id="WP_000208240.1">
    <property type="nucleotide sequence ID" value="NC_010102.1"/>
</dbReference>
<dbReference type="SMR" id="A9MZI2"/>
<dbReference type="MEROPS" id="T01.006"/>
<dbReference type="KEGG" id="spq:SPAB_05069"/>
<dbReference type="PATRIC" id="fig|1016998.12.peg.4758"/>
<dbReference type="HOGENOM" id="CLU_093872_1_0_6"/>
<dbReference type="BioCyc" id="SENT1016998:SPAB_RS20630-MONOMER"/>
<dbReference type="Proteomes" id="UP000008556">
    <property type="component" value="Chromosome"/>
</dbReference>
<dbReference type="GO" id="GO:0009376">
    <property type="term" value="C:HslUV protease complex"/>
    <property type="evidence" value="ECO:0007669"/>
    <property type="project" value="UniProtKB-UniRule"/>
</dbReference>
<dbReference type="GO" id="GO:0005839">
    <property type="term" value="C:proteasome core complex"/>
    <property type="evidence" value="ECO:0007669"/>
    <property type="project" value="InterPro"/>
</dbReference>
<dbReference type="GO" id="GO:0046872">
    <property type="term" value="F:metal ion binding"/>
    <property type="evidence" value="ECO:0007669"/>
    <property type="project" value="UniProtKB-KW"/>
</dbReference>
<dbReference type="GO" id="GO:0004298">
    <property type="term" value="F:threonine-type endopeptidase activity"/>
    <property type="evidence" value="ECO:0007669"/>
    <property type="project" value="UniProtKB-KW"/>
</dbReference>
<dbReference type="GO" id="GO:0051603">
    <property type="term" value="P:proteolysis involved in protein catabolic process"/>
    <property type="evidence" value="ECO:0007669"/>
    <property type="project" value="InterPro"/>
</dbReference>
<dbReference type="CDD" id="cd01913">
    <property type="entry name" value="protease_HslV"/>
    <property type="match status" value="1"/>
</dbReference>
<dbReference type="FunFam" id="3.60.20.10:FF:000002">
    <property type="entry name" value="ATP-dependent protease subunit HslV"/>
    <property type="match status" value="1"/>
</dbReference>
<dbReference type="Gene3D" id="3.60.20.10">
    <property type="entry name" value="Glutamine Phosphoribosylpyrophosphate, subunit 1, domain 1"/>
    <property type="match status" value="1"/>
</dbReference>
<dbReference type="HAMAP" id="MF_00248">
    <property type="entry name" value="HslV"/>
    <property type="match status" value="1"/>
</dbReference>
<dbReference type="InterPro" id="IPR022281">
    <property type="entry name" value="ATP-dep_Prtase_HsIV_su"/>
</dbReference>
<dbReference type="InterPro" id="IPR029055">
    <property type="entry name" value="Ntn_hydrolases_N"/>
</dbReference>
<dbReference type="InterPro" id="IPR001353">
    <property type="entry name" value="Proteasome_sua/b"/>
</dbReference>
<dbReference type="InterPro" id="IPR023333">
    <property type="entry name" value="Proteasome_suB-type"/>
</dbReference>
<dbReference type="NCBIfam" id="TIGR03692">
    <property type="entry name" value="ATP_dep_HslV"/>
    <property type="match status" value="1"/>
</dbReference>
<dbReference type="NCBIfam" id="NF003964">
    <property type="entry name" value="PRK05456.1"/>
    <property type="match status" value="1"/>
</dbReference>
<dbReference type="PANTHER" id="PTHR32194:SF0">
    <property type="entry name" value="ATP-DEPENDENT PROTEASE SUBUNIT HSLV"/>
    <property type="match status" value="1"/>
</dbReference>
<dbReference type="PANTHER" id="PTHR32194">
    <property type="entry name" value="METALLOPROTEASE TLDD"/>
    <property type="match status" value="1"/>
</dbReference>
<dbReference type="Pfam" id="PF00227">
    <property type="entry name" value="Proteasome"/>
    <property type="match status" value="1"/>
</dbReference>
<dbReference type="PIRSF" id="PIRSF039093">
    <property type="entry name" value="HslV"/>
    <property type="match status" value="1"/>
</dbReference>
<dbReference type="SUPFAM" id="SSF56235">
    <property type="entry name" value="N-terminal nucleophile aminohydrolases (Ntn hydrolases)"/>
    <property type="match status" value="1"/>
</dbReference>
<dbReference type="PROSITE" id="PS51476">
    <property type="entry name" value="PROTEASOME_BETA_2"/>
    <property type="match status" value="1"/>
</dbReference>